<name>ASSY_BACAA</name>
<gene>
    <name evidence="1" type="primary">argG</name>
    <name type="ordered locus">BAA_4891</name>
</gene>
<comment type="catalytic activity">
    <reaction evidence="1">
        <text>L-citrulline + L-aspartate + ATP = 2-(N(omega)-L-arginino)succinate + AMP + diphosphate + H(+)</text>
        <dbReference type="Rhea" id="RHEA:10932"/>
        <dbReference type="ChEBI" id="CHEBI:15378"/>
        <dbReference type="ChEBI" id="CHEBI:29991"/>
        <dbReference type="ChEBI" id="CHEBI:30616"/>
        <dbReference type="ChEBI" id="CHEBI:33019"/>
        <dbReference type="ChEBI" id="CHEBI:57472"/>
        <dbReference type="ChEBI" id="CHEBI:57743"/>
        <dbReference type="ChEBI" id="CHEBI:456215"/>
        <dbReference type="EC" id="6.3.4.5"/>
    </reaction>
</comment>
<comment type="pathway">
    <text evidence="1">Amino-acid biosynthesis; L-arginine biosynthesis; L-arginine from L-ornithine and carbamoyl phosphate: step 2/3.</text>
</comment>
<comment type="subunit">
    <text evidence="1">Homotetramer.</text>
</comment>
<comment type="subcellular location">
    <subcellularLocation>
        <location evidence="1">Cytoplasm</location>
    </subcellularLocation>
</comment>
<comment type="similarity">
    <text evidence="1">Belongs to the argininosuccinate synthase family. Type 1 subfamily.</text>
</comment>
<keyword id="KW-0028">Amino-acid biosynthesis</keyword>
<keyword id="KW-0055">Arginine biosynthesis</keyword>
<keyword id="KW-0067">ATP-binding</keyword>
<keyword id="KW-0963">Cytoplasm</keyword>
<keyword id="KW-0436">Ligase</keyword>
<keyword id="KW-0547">Nucleotide-binding</keyword>
<sequence length="401" mass="44693">MEKKKVVLAYSGGLDTSVAIKWLQEKNYDIIALCLDLGEGKDLAFVKEKALSVGAIKSYMIDVQEEFANEYALMAMQAHTLYEGKYPLVSALSRPLIAKKLVEIAEQEGATAVAHGCTGKGNDQVRFEVSIQALNPYLEVIAPVREWKWSREEEIAYAKENNVPIPINLDSPFSIDQNLWGRSNECGILEDPWAAPPEDAYEMTLALEDTPNKPEFVEIGFEAGVPTTLNGTAYPLSELIKTLNALAGKHGVGRIDHVENRLVGIKSREVYECPAAMTLITAHKELEDLTLVKEVAHFKPMIEQKITELIYNGLWFSPLKQALHAFLQETQKNVTGTVRVKLFKGHAIVEGRKSEYSLYDEKLATYTAQDEFNHDAAVGFISLFGLPTKVYSQVNQKKVEA</sequence>
<accession>C3PB97</accession>
<evidence type="ECO:0000255" key="1">
    <source>
        <dbReference type="HAMAP-Rule" id="MF_00005"/>
    </source>
</evidence>
<organism>
    <name type="scientific">Bacillus anthracis (strain A0248)</name>
    <dbReference type="NCBI Taxonomy" id="592021"/>
    <lineage>
        <taxon>Bacteria</taxon>
        <taxon>Bacillati</taxon>
        <taxon>Bacillota</taxon>
        <taxon>Bacilli</taxon>
        <taxon>Bacillales</taxon>
        <taxon>Bacillaceae</taxon>
        <taxon>Bacillus</taxon>
        <taxon>Bacillus cereus group</taxon>
    </lineage>
</organism>
<dbReference type="EC" id="6.3.4.5" evidence="1"/>
<dbReference type="EMBL" id="CP001598">
    <property type="protein sequence ID" value="ACQ47127.1"/>
    <property type="molecule type" value="Genomic_DNA"/>
</dbReference>
<dbReference type="RefSeq" id="WP_000412328.1">
    <property type="nucleotide sequence ID" value="NC_012659.1"/>
</dbReference>
<dbReference type="SMR" id="C3PB97"/>
<dbReference type="GeneID" id="45024503"/>
<dbReference type="KEGG" id="bai:BAA_4891"/>
<dbReference type="HOGENOM" id="CLU_032784_4_2_9"/>
<dbReference type="UniPathway" id="UPA00068">
    <property type="reaction ID" value="UER00113"/>
</dbReference>
<dbReference type="GO" id="GO:0005737">
    <property type="term" value="C:cytoplasm"/>
    <property type="evidence" value="ECO:0007669"/>
    <property type="project" value="UniProtKB-SubCell"/>
</dbReference>
<dbReference type="GO" id="GO:0004055">
    <property type="term" value="F:argininosuccinate synthase activity"/>
    <property type="evidence" value="ECO:0007669"/>
    <property type="project" value="UniProtKB-UniRule"/>
</dbReference>
<dbReference type="GO" id="GO:0005524">
    <property type="term" value="F:ATP binding"/>
    <property type="evidence" value="ECO:0007669"/>
    <property type="project" value="UniProtKB-UniRule"/>
</dbReference>
<dbReference type="GO" id="GO:0000053">
    <property type="term" value="P:argininosuccinate metabolic process"/>
    <property type="evidence" value="ECO:0007669"/>
    <property type="project" value="TreeGrafter"/>
</dbReference>
<dbReference type="GO" id="GO:0006526">
    <property type="term" value="P:L-arginine biosynthetic process"/>
    <property type="evidence" value="ECO:0007669"/>
    <property type="project" value="UniProtKB-UniRule"/>
</dbReference>
<dbReference type="GO" id="GO:0000050">
    <property type="term" value="P:urea cycle"/>
    <property type="evidence" value="ECO:0007669"/>
    <property type="project" value="TreeGrafter"/>
</dbReference>
<dbReference type="CDD" id="cd01999">
    <property type="entry name" value="ASS"/>
    <property type="match status" value="1"/>
</dbReference>
<dbReference type="FunFam" id="1.20.5.470:FF:000002">
    <property type="entry name" value="Argininosuccinate synthase"/>
    <property type="match status" value="1"/>
</dbReference>
<dbReference type="FunFam" id="3.40.50.620:FF:000038">
    <property type="entry name" value="Argininosuccinate synthase"/>
    <property type="match status" value="1"/>
</dbReference>
<dbReference type="FunFam" id="3.90.1260.10:FF:000007">
    <property type="entry name" value="Argininosuccinate synthase"/>
    <property type="match status" value="1"/>
</dbReference>
<dbReference type="Gene3D" id="3.90.1260.10">
    <property type="entry name" value="Argininosuccinate synthetase, chain A, domain 2"/>
    <property type="match status" value="1"/>
</dbReference>
<dbReference type="Gene3D" id="3.40.50.620">
    <property type="entry name" value="HUPs"/>
    <property type="match status" value="1"/>
</dbReference>
<dbReference type="Gene3D" id="1.20.5.470">
    <property type="entry name" value="Single helix bin"/>
    <property type="match status" value="1"/>
</dbReference>
<dbReference type="HAMAP" id="MF_00005">
    <property type="entry name" value="Arg_succ_synth_type1"/>
    <property type="match status" value="1"/>
</dbReference>
<dbReference type="InterPro" id="IPR048268">
    <property type="entry name" value="Arginosuc_syn_C"/>
</dbReference>
<dbReference type="InterPro" id="IPR048267">
    <property type="entry name" value="Arginosuc_syn_N"/>
</dbReference>
<dbReference type="InterPro" id="IPR001518">
    <property type="entry name" value="Arginosuc_synth"/>
</dbReference>
<dbReference type="InterPro" id="IPR018223">
    <property type="entry name" value="Arginosuc_synth_CS"/>
</dbReference>
<dbReference type="InterPro" id="IPR023434">
    <property type="entry name" value="Arginosuc_synth_type_1_subfam"/>
</dbReference>
<dbReference type="InterPro" id="IPR024074">
    <property type="entry name" value="AS_cat/multimer_dom_body"/>
</dbReference>
<dbReference type="InterPro" id="IPR014729">
    <property type="entry name" value="Rossmann-like_a/b/a_fold"/>
</dbReference>
<dbReference type="NCBIfam" id="TIGR00032">
    <property type="entry name" value="argG"/>
    <property type="match status" value="1"/>
</dbReference>
<dbReference type="NCBIfam" id="NF001770">
    <property type="entry name" value="PRK00509.1"/>
    <property type="match status" value="1"/>
</dbReference>
<dbReference type="PANTHER" id="PTHR11587">
    <property type="entry name" value="ARGININOSUCCINATE SYNTHASE"/>
    <property type="match status" value="1"/>
</dbReference>
<dbReference type="PANTHER" id="PTHR11587:SF2">
    <property type="entry name" value="ARGININOSUCCINATE SYNTHASE"/>
    <property type="match status" value="1"/>
</dbReference>
<dbReference type="Pfam" id="PF20979">
    <property type="entry name" value="Arginosuc_syn_C"/>
    <property type="match status" value="1"/>
</dbReference>
<dbReference type="Pfam" id="PF00764">
    <property type="entry name" value="Arginosuc_synth"/>
    <property type="match status" value="1"/>
</dbReference>
<dbReference type="SUPFAM" id="SSF52402">
    <property type="entry name" value="Adenine nucleotide alpha hydrolases-like"/>
    <property type="match status" value="1"/>
</dbReference>
<dbReference type="SUPFAM" id="SSF69864">
    <property type="entry name" value="Argininosuccinate synthetase, C-terminal domain"/>
    <property type="match status" value="1"/>
</dbReference>
<dbReference type="PROSITE" id="PS00564">
    <property type="entry name" value="ARGININOSUCCIN_SYN_1"/>
    <property type="match status" value="1"/>
</dbReference>
<dbReference type="PROSITE" id="PS00565">
    <property type="entry name" value="ARGININOSUCCIN_SYN_2"/>
    <property type="match status" value="1"/>
</dbReference>
<protein>
    <recommendedName>
        <fullName evidence="1">Argininosuccinate synthase</fullName>
        <ecNumber evidence="1">6.3.4.5</ecNumber>
    </recommendedName>
    <alternativeName>
        <fullName evidence="1">Citrulline--aspartate ligase</fullName>
    </alternativeName>
</protein>
<reference key="1">
    <citation type="submission" date="2009-04" db="EMBL/GenBank/DDBJ databases">
        <title>Genome sequence of Bacillus anthracis A0248.</title>
        <authorList>
            <person name="Dodson R.J."/>
            <person name="Munk A.C."/>
            <person name="Bruce D."/>
            <person name="Detter C."/>
            <person name="Tapia R."/>
            <person name="Sutton G."/>
            <person name="Sims D."/>
            <person name="Brettin T."/>
        </authorList>
    </citation>
    <scope>NUCLEOTIDE SEQUENCE [LARGE SCALE GENOMIC DNA]</scope>
    <source>
        <strain>A0248</strain>
    </source>
</reference>
<proteinExistence type="inferred from homology"/>
<feature type="chain" id="PRO_1000191877" description="Argininosuccinate synthase">
    <location>
        <begin position="1"/>
        <end position="401"/>
    </location>
</feature>
<feature type="binding site" evidence="1">
    <location>
        <begin position="9"/>
        <end position="17"/>
    </location>
    <ligand>
        <name>ATP</name>
        <dbReference type="ChEBI" id="CHEBI:30616"/>
    </ligand>
</feature>
<feature type="binding site" evidence="1">
    <location>
        <position position="86"/>
    </location>
    <ligand>
        <name>L-citrulline</name>
        <dbReference type="ChEBI" id="CHEBI:57743"/>
    </ligand>
</feature>
<feature type="binding site" evidence="1">
    <location>
        <position position="116"/>
    </location>
    <ligand>
        <name>ATP</name>
        <dbReference type="ChEBI" id="CHEBI:30616"/>
    </ligand>
</feature>
<feature type="binding site" evidence="1">
    <location>
        <position position="118"/>
    </location>
    <ligand>
        <name>L-aspartate</name>
        <dbReference type="ChEBI" id="CHEBI:29991"/>
    </ligand>
</feature>
<feature type="binding site" evidence="1">
    <location>
        <position position="122"/>
    </location>
    <ligand>
        <name>L-aspartate</name>
        <dbReference type="ChEBI" id="CHEBI:29991"/>
    </ligand>
</feature>
<feature type="binding site" evidence="1">
    <location>
        <position position="122"/>
    </location>
    <ligand>
        <name>L-citrulline</name>
        <dbReference type="ChEBI" id="CHEBI:57743"/>
    </ligand>
</feature>
<feature type="binding site" evidence="1">
    <location>
        <position position="123"/>
    </location>
    <ligand>
        <name>L-aspartate</name>
        <dbReference type="ChEBI" id="CHEBI:29991"/>
    </ligand>
</feature>
<feature type="binding site" evidence="1">
    <location>
        <position position="126"/>
    </location>
    <ligand>
        <name>L-citrulline</name>
        <dbReference type="ChEBI" id="CHEBI:57743"/>
    </ligand>
</feature>
<feature type="binding site" evidence="1">
    <location>
        <position position="174"/>
    </location>
    <ligand>
        <name>L-citrulline</name>
        <dbReference type="ChEBI" id="CHEBI:57743"/>
    </ligand>
</feature>
<feature type="binding site" evidence="1">
    <location>
        <position position="183"/>
    </location>
    <ligand>
        <name>L-citrulline</name>
        <dbReference type="ChEBI" id="CHEBI:57743"/>
    </ligand>
</feature>
<feature type="binding site" evidence="1">
    <location>
        <position position="259"/>
    </location>
    <ligand>
        <name>L-citrulline</name>
        <dbReference type="ChEBI" id="CHEBI:57743"/>
    </ligand>
</feature>
<feature type="binding site" evidence="1">
    <location>
        <position position="271"/>
    </location>
    <ligand>
        <name>L-citrulline</name>
        <dbReference type="ChEBI" id="CHEBI:57743"/>
    </ligand>
</feature>